<name>RL19_SHEPC</name>
<protein>
    <recommendedName>
        <fullName evidence="1">Large ribosomal subunit protein bL19</fullName>
    </recommendedName>
    <alternativeName>
        <fullName evidence="2">50S ribosomal protein L19</fullName>
    </alternativeName>
</protein>
<sequence length="117" mass="13292">MNNIIKMLNDEQMKQDVPAFGAGDTVVVQVRVKEGDKERLQAFEGVVIAKRNRGLHSAFTVRKISNGEGVERAFQTHSPLIASIEVKRRGRVRRAKLYYLRDRSGKSARIREKLATK</sequence>
<comment type="function">
    <text evidence="1">This protein is located at the 30S-50S ribosomal subunit interface and may play a role in the structure and function of the aminoacyl-tRNA binding site.</text>
</comment>
<comment type="similarity">
    <text evidence="1">Belongs to the bacterial ribosomal protein bL19 family.</text>
</comment>
<dbReference type="EMBL" id="CP000681">
    <property type="protein sequence ID" value="ABP74899.1"/>
    <property type="molecule type" value="Genomic_DNA"/>
</dbReference>
<dbReference type="SMR" id="A4Y4L6"/>
<dbReference type="STRING" id="319224.Sputcn32_1171"/>
<dbReference type="KEGG" id="spc:Sputcn32_1171"/>
<dbReference type="eggNOG" id="COG0335">
    <property type="taxonomic scope" value="Bacteria"/>
</dbReference>
<dbReference type="HOGENOM" id="CLU_103507_2_2_6"/>
<dbReference type="GO" id="GO:0022625">
    <property type="term" value="C:cytosolic large ribosomal subunit"/>
    <property type="evidence" value="ECO:0007669"/>
    <property type="project" value="TreeGrafter"/>
</dbReference>
<dbReference type="GO" id="GO:0003735">
    <property type="term" value="F:structural constituent of ribosome"/>
    <property type="evidence" value="ECO:0007669"/>
    <property type="project" value="InterPro"/>
</dbReference>
<dbReference type="GO" id="GO:0006412">
    <property type="term" value="P:translation"/>
    <property type="evidence" value="ECO:0007669"/>
    <property type="project" value="UniProtKB-UniRule"/>
</dbReference>
<dbReference type="FunFam" id="2.30.30.790:FF:000001">
    <property type="entry name" value="50S ribosomal protein L19"/>
    <property type="match status" value="1"/>
</dbReference>
<dbReference type="Gene3D" id="2.30.30.790">
    <property type="match status" value="1"/>
</dbReference>
<dbReference type="HAMAP" id="MF_00402">
    <property type="entry name" value="Ribosomal_bL19"/>
    <property type="match status" value="1"/>
</dbReference>
<dbReference type="InterPro" id="IPR001857">
    <property type="entry name" value="Ribosomal_bL19"/>
</dbReference>
<dbReference type="InterPro" id="IPR018257">
    <property type="entry name" value="Ribosomal_bL19_CS"/>
</dbReference>
<dbReference type="InterPro" id="IPR038657">
    <property type="entry name" value="Ribosomal_bL19_sf"/>
</dbReference>
<dbReference type="InterPro" id="IPR008991">
    <property type="entry name" value="Translation_prot_SH3-like_sf"/>
</dbReference>
<dbReference type="NCBIfam" id="TIGR01024">
    <property type="entry name" value="rplS_bact"/>
    <property type="match status" value="1"/>
</dbReference>
<dbReference type="PANTHER" id="PTHR15680:SF9">
    <property type="entry name" value="LARGE RIBOSOMAL SUBUNIT PROTEIN BL19M"/>
    <property type="match status" value="1"/>
</dbReference>
<dbReference type="PANTHER" id="PTHR15680">
    <property type="entry name" value="RIBOSOMAL PROTEIN L19"/>
    <property type="match status" value="1"/>
</dbReference>
<dbReference type="Pfam" id="PF01245">
    <property type="entry name" value="Ribosomal_L19"/>
    <property type="match status" value="1"/>
</dbReference>
<dbReference type="PIRSF" id="PIRSF002191">
    <property type="entry name" value="Ribosomal_L19"/>
    <property type="match status" value="1"/>
</dbReference>
<dbReference type="PRINTS" id="PR00061">
    <property type="entry name" value="RIBOSOMALL19"/>
</dbReference>
<dbReference type="SUPFAM" id="SSF50104">
    <property type="entry name" value="Translation proteins SH3-like domain"/>
    <property type="match status" value="1"/>
</dbReference>
<dbReference type="PROSITE" id="PS01015">
    <property type="entry name" value="RIBOSOMAL_L19"/>
    <property type="match status" value="1"/>
</dbReference>
<organism>
    <name type="scientific">Shewanella putrefaciens (strain CN-32 / ATCC BAA-453)</name>
    <dbReference type="NCBI Taxonomy" id="319224"/>
    <lineage>
        <taxon>Bacteria</taxon>
        <taxon>Pseudomonadati</taxon>
        <taxon>Pseudomonadota</taxon>
        <taxon>Gammaproteobacteria</taxon>
        <taxon>Alteromonadales</taxon>
        <taxon>Shewanellaceae</taxon>
        <taxon>Shewanella</taxon>
    </lineage>
</organism>
<proteinExistence type="inferred from homology"/>
<evidence type="ECO:0000255" key="1">
    <source>
        <dbReference type="HAMAP-Rule" id="MF_00402"/>
    </source>
</evidence>
<evidence type="ECO:0000305" key="2"/>
<reference key="1">
    <citation type="submission" date="2007-04" db="EMBL/GenBank/DDBJ databases">
        <title>Complete sequence of Shewanella putrefaciens CN-32.</title>
        <authorList>
            <consortium name="US DOE Joint Genome Institute"/>
            <person name="Copeland A."/>
            <person name="Lucas S."/>
            <person name="Lapidus A."/>
            <person name="Barry K."/>
            <person name="Detter J.C."/>
            <person name="Glavina del Rio T."/>
            <person name="Hammon N."/>
            <person name="Israni S."/>
            <person name="Dalin E."/>
            <person name="Tice H."/>
            <person name="Pitluck S."/>
            <person name="Chain P."/>
            <person name="Malfatti S."/>
            <person name="Shin M."/>
            <person name="Vergez L."/>
            <person name="Schmutz J."/>
            <person name="Larimer F."/>
            <person name="Land M."/>
            <person name="Hauser L."/>
            <person name="Kyrpides N."/>
            <person name="Mikhailova N."/>
            <person name="Romine M.F."/>
            <person name="Fredrickson J."/>
            <person name="Tiedje J."/>
            <person name="Richardson P."/>
        </authorList>
    </citation>
    <scope>NUCLEOTIDE SEQUENCE [LARGE SCALE GENOMIC DNA]</scope>
    <source>
        <strain>CN-32 / ATCC BAA-453</strain>
    </source>
</reference>
<accession>A4Y4L6</accession>
<keyword id="KW-0687">Ribonucleoprotein</keyword>
<keyword id="KW-0689">Ribosomal protein</keyword>
<feature type="chain" id="PRO_1000049743" description="Large ribosomal subunit protein bL19">
    <location>
        <begin position="1"/>
        <end position="117"/>
    </location>
</feature>
<gene>
    <name evidence="1" type="primary">rplS</name>
    <name type="ordered locus">Sputcn32_1171</name>
</gene>